<organism>
    <name type="scientific">Shewanella woodyi (strain ATCC 51908 / MS32)</name>
    <dbReference type="NCBI Taxonomy" id="392500"/>
    <lineage>
        <taxon>Bacteria</taxon>
        <taxon>Pseudomonadati</taxon>
        <taxon>Pseudomonadota</taxon>
        <taxon>Gammaproteobacteria</taxon>
        <taxon>Alteromonadales</taxon>
        <taxon>Shewanellaceae</taxon>
        <taxon>Shewanella</taxon>
    </lineage>
</organism>
<keyword id="KW-1185">Reference proteome</keyword>
<keyword id="KW-0687">Ribonucleoprotein</keyword>
<keyword id="KW-0689">Ribosomal protein</keyword>
<keyword id="KW-0694">RNA-binding</keyword>
<keyword id="KW-0699">rRNA-binding</keyword>
<feature type="chain" id="PRO_1000140793" description="Small ribosomal subunit protein uS4">
    <location>
        <begin position="1"/>
        <end position="206"/>
    </location>
</feature>
<feature type="domain" description="S4 RNA-binding" evidence="1">
    <location>
        <begin position="96"/>
        <end position="156"/>
    </location>
</feature>
<reference key="1">
    <citation type="submission" date="2008-02" db="EMBL/GenBank/DDBJ databases">
        <title>Complete sequence of Shewanella woodyi ATCC 51908.</title>
        <authorList>
            <consortium name="US DOE Joint Genome Institute"/>
            <person name="Copeland A."/>
            <person name="Lucas S."/>
            <person name="Lapidus A."/>
            <person name="Glavina del Rio T."/>
            <person name="Dalin E."/>
            <person name="Tice H."/>
            <person name="Bruce D."/>
            <person name="Goodwin L."/>
            <person name="Pitluck S."/>
            <person name="Sims D."/>
            <person name="Brettin T."/>
            <person name="Detter J.C."/>
            <person name="Han C."/>
            <person name="Kuske C.R."/>
            <person name="Schmutz J."/>
            <person name="Larimer F."/>
            <person name="Land M."/>
            <person name="Hauser L."/>
            <person name="Kyrpides N."/>
            <person name="Lykidis A."/>
            <person name="Zhao J.-S."/>
            <person name="Richardson P."/>
        </authorList>
    </citation>
    <scope>NUCLEOTIDE SEQUENCE [LARGE SCALE GENOMIC DNA]</scope>
    <source>
        <strain>ATCC 51908 / MS32</strain>
    </source>
</reference>
<evidence type="ECO:0000255" key="1">
    <source>
        <dbReference type="HAMAP-Rule" id="MF_01306"/>
    </source>
</evidence>
<evidence type="ECO:0000305" key="2"/>
<protein>
    <recommendedName>
        <fullName evidence="1">Small ribosomal subunit protein uS4</fullName>
    </recommendedName>
    <alternativeName>
        <fullName evidence="2">30S ribosomal protein S4</fullName>
    </alternativeName>
</protein>
<sequence>MARYLGPKLKLSRREGTDLFLKSGVRAIDSKCKLETAPGQHGARKTRLSEYGVQLREKQKVRRTYGVLEKQFRNYYKDAARTKGNTGENLLTLLETRLDNVVYRMGFGATRAEARQLVSHKSIMVNGSVVNIPSFKVSANDVISIREKSKKQARIIAALEVSSQREKPTWVEVDNTKMEGAFKRLPERSDLSAEINEQLIVELYSK</sequence>
<dbReference type="EMBL" id="CP000961">
    <property type="protein sequence ID" value="ACA88916.1"/>
    <property type="molecule type" value="Genomic_DNA"/>
</dbReference>
<dbReference type="RefSeq" id="WP_012327240.1">
    <property type="nucleotide sequence ID" value="NC_010506.1"/>
</dbReference>
<dbReference type="SMR" id="B1KM36"/>
<dbReference type="STRING" id="392500.Swoo_4666"/>
<dbReference type="KEGG" id="swd:Swoo_4666"/>
<dbReference type="eggNOG" id="COG0522">
    <property type="taxonomic scope" value="Bacteria"/>
</dbReference>
<dbReference type="HOGENOM" id="CLU_092403_0_2_6"/>
<dbReference type="Proteomes" id="UP000002168">
    <property type="component" value="Chromosome"/>
</dbReference>
<dbReference type="GO" id="GO:0015935">
    <property type="term" value="C:small ribosomal subunit"/>
    <property type="evidence" value="ECO:0007669"/>
    <property type="project" value="InterPro"/>
</dbReference>
<dbReference type="GO" id="GO:0019843">
    <property type="term" value="F:rRNA binding"/>
    <property type="evidence" value="ECO:0007669"/>
    <property type="project" value="UniProtKB-UniRule"/>
</dbReference>
<dbReference type="GO" id="GO:0003735">
    <property type="term" value="F:structural constituent of ribosome"/>
    <property type="evidence" value="ECO:0007669"/>
    <property type="project" value="InterPro"/>
</dbReference>
<dbReference type="GO" id="GO:0042274">
    <property type="term" value="P:ribosomal small subunit biogenesis"/>
    <property type="evidence" value="ECO:0007669"/>
    <property type="project" value="TreeGrafter"/>
</dbReference>
<dbReference type="GO" id="GO:0006412">
    <property type="term" value="P:translation"/>
    <property type="evidence" value="ECO:0007669"/>
    <property type="project" value="UniProtKB-UniRule"/>
</dbReference>
<dbReference type="CDD" id="cd00165">
    <property type="entry name" value="S4"/>
    <property type="match status" value="1"/>
</dbReference>
<dbReference type="FunFam" id="1.10.1050.10:FF:000001">
    <property type="entry name" value="30S ribosomal protein S4"/>
    <property type="match status" value="1"/>
</dbReference>
<dbReference type="FunFam" id="3.10.290.10:FF:000001">
    <property type="entry name" value="30S ribosomal protein S4"/>
    <property type="match status" value="1"/>
</dbReference>
<dbReference type="Gene3D" id="1.10.1050.10">
    <property type="entry name" value="Ribosomal Protein S4 Delta 41, Chain A, domain 1"/>
    <property type="match status" value="1"/>
</dbReference>
<dbReference type="Gene3D" id="3.10.290.10">
    <property type="entry name" value="RNA-binding S4 domain"/>
    <property type="match status" value="1"/>
</dbReference>
<dbReference type="HAMAP" id="MF_01306_B">
    <property type="entry name" value="Ribosomal_uS4_B"/>
    <property type="match status" value="1"/>
</dbReference>
<dbReference type="InterPro" id="IPR022801">
    <property type="entry name" value="Ribosomal_uS4"/>
</dbReference>
<dbReference type="InterPro" id="IPR005709">
    <property type="entry name" value="Ribosomal_uS4_bac-type"/>
</dbReference>
<dbReference type="InterPro" id="IPR018079">
    <property type="entry name" value="Ribosomal_uS4_CS"/>
</dbReference>
<dbReference type="InterPro" id="IPR001912">
    <property type="entry name" value="Ribosomal_uS4_N"/>
</dbReference>
<dbReference type="InterPro" id="IPR002942">
    <property type="entry name" value="S4_RNA-bd"/>
</dbReference>
<dbReference type="InterPro" id="IPR036986">
    <property type="entry name" value="S4_RNA-bd_sf"/>
</dbReference>
<dbReference type="NCBIfam" id="NF003717">
    <property type="entry name" value="PRK05327.1"/>
    <property type="match status" value="1"/>
</dbReference>
<dbReference type="NCBIfam" id="TIGR01017">
    <property type="entry name" value="rpsD_bact"/>
    <property type="match status" value="1"/>
</dbReference>
<dbReference type="PANTHER" id="PTHR11831">
    <property type="entry name" value="30S 40S RIBOSOMAL PROTEIN"/>
    <property type="match status" value="1"/>
</dbReference>
<dbReference type="PANTHER" id="PTHR11831:SF4">
    <property type="entry name" value="SMALL RIBOSOMAL SUBUNIT PROTEIN US4M"/>
    <property type="match status" value="1"/>
</dbReference>
<dbReference type="Pfam" id="PF00163">
    <property type="entry name" value="Ribosomal_S4"/>
    <property type="match status" value="1"/>
</dbReference>
<dbReference type="Pfam" id="PF01479">
    <property type="entry name" value="S4"/>
    <property type="match status" value="1"/>
</dbReference>
<dbReference type="SMART" id="SM01390">
    <property type="entry name" value="Ribosomal_S4"/>
    <property type="match status" value="1"/>
</dbReference>
<dbReference type="SMART" id="SM00363">
    <property type="entry name" value="S4"/>
    <property type="match status" value="1"/>
</dbReference>
<dbReference type="SUPFAM" id="SSF55174">
    <property type="entry name" value="Alpha-L RNA-binding motif"/>
    <property type="match status" value="1"/>
</dbReference>
<dbReference type="PROSITE" id="PS00632">
    <property type="entry name" value="RIBOSOMAL_S4"/>
    <property type="match status" value="1"/>
</dbReference>
<dbReference type="PROSITE" id="PS50889">
    <property type="entry name" value="S4"/>
    <property type="match status" value="1"/>
</dbReference>
<gene>
    <name evidence="1" type="primary">rpsD</name>
    <name type="ordered locus">Swoo_4666</name>
</gene>
<comment type="function">
    <text evidence="1">One of the primary rRNA binding proteins, it binds directly to 16S rRNA where it nucleates assembly of the body of the 30S subunit.</text>
</comment>
<comment type="function">
    <text evidence="1">With S5 and S12 plays an important role in translational accuracy.</text>
</comment>
<comment type="subunit">
    <text evidence="1">Part of the 30S ribosomal subunit. Contacts protein S5. The interaction surface between S4 and S5 is involved in control of translational fidelity.</text>
</comment>
<comment type="similarity">
    <text evidence="1">Belongs to the universal ribosomal protein uS4 family.</text>
</comment>
<proteinExistence type="inferred from homology"/>
<name>RS4_SHEWM</name>
<accession>B1KM36</accession>